<protein>
    <recommendedName>
        <fullName evidence="1">DNA-directed RNA polymerase subunit beta'</fullName>
        <shortName evidence="1">RNAP subunit beta'</shortName>
        <ecNumber evidence="1">2.7.7.6</ecNumber>
    </recommendedName>
    <alternativeName>
        <fullName evidence="1">RNA polymerase subunit beta'</fullName>
    </alternativeName>
    <alternativeName>
        <fullName evidence="1">Transcriptase subunit beta'</fullName>
    </alternativeName>
</protein>
<feature type="chain" id="PRO_0000353330" description="DNA-directed RNA polymerase subunit beta'">
    <location>
        <begin position="1"/>
        <end position="1177"/>
    </location>
</feature>
<feature type="binding site" evidence="1">
    <location>
        <position position="60"/>
    </location>
    <ligand>
        <name>Zn(2+)</name>
        <dbReference type="ChEBI" id="CHEBI:29105"/>
        <label>1</label>
    </ligand>
</feature>
<feature type="binding site" evidence="1">
    <location>
        <position position="62"/>
    </location>
    <ligand>
        <name>Zn(2+)</name>
        <dbReference type="ChEBI" id="CHEBI:29105"/>
        <label>1</label>
    </ligand>
</feature>
<feature type="binding site" evidence="1">
    <location>
        <position position="75"/>
    </location>
    <ligand>
        <name>Zn(2+)</name>
        <dbReference type="ChEBI" id="CHEBI:29105"/>
        <label>1</label>
    </ligand>
</feature>
<feature type="binding site" evidence="1">
    <location>
        <position position="78"/>
    </location>
    <ligand>
        <name>Zn(2+)</name>
        <dbReference type="ChEBI" id="CHEBI:29105"/>
        <label>1</label>
    </ligand>
</feature>
<feature type="binding site" evidence="1">
    <location>
        <position position="450"/>
    </location>
    <ligand>
        <name>Mg(2+)</name>
        <dbReference type="ChEBI" id="CHEBI:18420"/>
    </ligand>
</feature>
<feature type="binding site" evidence="1">
    <location>
        <position position="452"/>
    </location>
    <ligand>
        <name>Mg(2+)</name>
        <dbReference type="ChEBI" id="CHEBI:18420"/>
    </ligand>
</feature>
<feature type="binding site" evidence="1">
    <location>
        <position position="454"/>
    </location>
    <ligand>
        <name>Mg(2+)</name>
        <dbReference type="ChEBI" id="CHEBI:18420"/>
    </ligand>
</feature>
<feature type="binding site" evidence="1">
    <location>
        <position position="795"/>
    </location>
    <ligand>
        <name>Zn(2+)</name>
        <dbReference type="ChEBI" id="CHEBI:29105"/>
        <label>2</label>
    </ligand>
</feature>
<feature type="binding site" evidence="1">
    <location>
        <position position="869"/>
    </location>
    <ligand>
        <name>Zn(2+)</name>
        <dbReference type="ChEBI" id="CHEBI:29105"/>
        <label>2</label>
    </ligand>
</feature>
<feature type="binding site" evidence="1">
    <location>
        <position position="876"/>
    </location>
    <ligand>
        <name>Zn(2+)</name>
        <dbReference type="ChEBI" id="CHEBI:29105"/>
        <label>2</label>
    </ligand>
</feature>
<feature type="binding site" evidence="1">
    <location>
        <position position="879"/>
    </location>
    <ligand>
        <name>Zn(2+)</name>
        <dbReference type="ChEBI" id="CHEBI:29105"/>
        <label>2</label>
    </ligand>
</feature>
<reference key="1">
    <citation type="submission" date="2008-04" db="EMBL/GenBank/DDBJ databases">
        <title>Complete sequence of Clostridium botulinum strain Eklund.</title>
        <authorList>
            <person name="Brinkac L.M."/>
            <person name="Brown J.L."/>
            <person name="Bruce D."/>
            <person name="Detter C."/>
            <person name="Munk C."/>
            <person name="Smith L.A."/>
            <person name="Smith T.J."/>
            <person name="Sutton G."/>
            <person name="Brettin T.S."/>
        </authorList>
    </citation>
    <scope>NUCLEOTIDE SEQUENCE [LARGE SCALE GENOMIC DNA]</scope>
    <source>
        <strain>Eklund 17B / Type B</strain>
    </source>
</reference>
<name>RPOC_CLOBB</name>
<comment type="function">
    <text evidence="1">DNA-dependent RNA polymerase catalyzes the transcription of DNA into RNA using the four ribonucleoside triphosphates as substrates.</text>
</comment>
<comment type="catalytic activity">
    <reaction evidence="1">
        <text>RNA(n) + a ribonucleoside 5'-triphosphate = RNA(n+1) + diphosphate</text>
        <dbReference type="Rhea" id="RHEA:21248"/>
        <dbReference type="Rhea" id="RHEA-COMP:14527"/>
        <dbReference type="Rhea" id="RHEA-COMP:17342"/>
        <dbReference type="ChEBI" id="CHEBI:33019"/>
        <dbReference type="ChEBI" id="CHEBI:61557"/>
        <dbReference type="ChEBI" id="CHEBI:140395"/>
        <dbReference type="EC" id="2.7.7.6"/>
    </reaction>
</comment>
<comment type="cofactor">
    <cofactor evidence="1">
        <name>Mg(2+)</name>
        <dbReference type="ChEBI" id="CHEBI:18420"/>
    </cofactor>
    <text evidence="1">Binds 1 Mg(2+) ion per subunit.</text>
</comment>
<comment type="cofactor">
    <cofactor evidence="1">
        <name>Zn(2+)</name>
        <dbReference type="ChEBI" id="CHEBI:29105"/>
    </cofactor>
    <text evidence="1">Binds 2 Zn(2+) ions per subunit.</text>
</comment>
<comment type="subunit">
    <text evidence="1">The RNAP catalytic core consists of 2 alpha, 1 beta, 1 beta' and 1 omega subunit. When a sigma factor is associated with the core the holoenzyme is formed, which can initiate transcription.</text>
</comment>
<comment type="similarity">
    <text evidence="1">Belongs to the RNA polymerase beta' chain family.</text>
</comment>
<accession>B2TIG9</accession>
<dbReference type="EC" id="2.7.7.6" evidence="1"/>
<dbReference type="EMBL" id="CP001056">
    <property type="protein sequence ID" value="ACD22857.1"/>
    <property type="molecule type" value="Genomic_DNA"/>
</dbReference>
<dbReference type="SMR" id="B2TIG9"/>
<dbReference type="KEGG" id="cbk:CLL_A0232"/>
<dbReference type="PATRIC" id="fig|935198.13.peg.206"/>
<dbReference type="HOGENOM" id="CLU_000524_3_1_9"/>
<dbReference type="Proteomes" id="UP000001195">
    <property type="component" value="Chromosome"/>
</dbReference>
<dbReference type="GO" id="GO:0000428">
    <property type="term" value="C:DNA-directed RNA polymerase complex"/>
    <property type="evidence" value="ECO:0007669"/>
    <property type="project" value="UniProtKB-KW"/>
</dbReference>
<dbReference type="GO" id="GO:0003677">
    <property type="term" value="F:DNA binding"/>
    <property type="evidence" value="ECO:0007669"/>
    <property type="project" value="UniProtKB-UniRule"/>
</dbReference>
<dbReference type="GO" id="GO:0003899">
    <property type="term" value="F:DNA-directed RNA polymerase activity"/>
    <property type="evidence" value="ECO:0007669"/>
    <property type="project" value="UniProtKB-UniRule"/>
</dbReference>
<dbReference type="GO" id="GO:0000287">
    <property type="term" value="F:magnesium ion binding"/>
    <property type="evidence" value="ECO:0007669"/>
    <property type="project" value="UniProtKB-UniRule"/>
</dbReference>
<dbReference type="GO" id="GO:0008270">
    <property type="term" value="F:zinc ion binding"/>
    <property type="evidence" value="ECO:0007669"/>
    <property type="project" value="UniProtKB-UniRule"/>
</dbReference>
<dbReference type="GO" id="GO:0006351">
    <property type="term" value="P:DNA-templated transcription"/>
    <property type="evidence" value="ECO:0007669"/>
    <property type="project" value="UniProtKB-UniRule"/>
</dbReference>
<dbReference type="CDD" id="cd02655">
    <property type="entry name" value="RNAP_beta'_C"/>
    <property type="match status" value="1"/>
</dbReference>
<dbReference type="CDD" id="cd01609">
    <property type="entry name" value="RNAP_beta'_N"/>
    <property type="match status" value="1"/>
</dbReference>
<dbReference type="FunFam" id="1.10.150.390:FF:000002">
    <property type="entry name" value="DNA-directed RNA polymerase subunit beta"/>
    <property type="match status" value="1"/>
</dbReference>
<dbReference type="FunFam" id="1.10.40.90:FF:000001">
    <property type="entry name" value="DNA-directed RNA polymerase subunit beta"/>
    <property type="match status" value="1"/>
</dbReference>
<dbReference type="FunFam" id="4.10.860.120:FF:000001">
    <property type="entry name" value="DNA-directed RNA polymerase subunit beta"/>
    <property type="match status" value="1"/>
</dbReference>
<dbReference type="Gene3D" id="1.10.132.30">
    <property type="match status" value="1"/>
</dbReference>
<dbReference type="Gene3D" id="1.10.150.390">
    <property type="match status" value="1"/>
</dbReference>
<dbReference type="Gene3D" id="1.10.1790.20">
    <property type="match status" value="1"/>
</dbReference>
<dbReference type="Gene3D" id="1.10.40.90">
    <property type="match status" value="1"/>
</dbReference>
<dbReference type="Gene3D" id="2.40.40.20">
    <property type="match status" value="1"/>
</dbReference>
<dbReference type="Gene3D" id="2.40.50.100">
    <property type="match status" value="1"/>
</dbReference>
<dbReference type="Gene3D" id="4.10.860.120">
    <property type="entry name" value="RNA polymerase II, clamp domain"/>
    <property type="match status" value="1"/>
</dbReference>
<dbReference type="Gene3D" id="1.10.274.100">
    <property type="entry name" value="RNA polymerase Rpb1, domain 3"/>
    <property type="match status" value="1"/>
</dbReference>
<dbReference type="HAMAP" id="MF_01322">
    <property type="entry name" value="RNApol_bact_RpoC"/>
    <property type="match status" value="1"/>
</dbReference>
<dbReference type="InterPro" id="IPR045867">
    <property type="entry name" value="DNA-dir_RpoC_beta_prime"/>
</dbReference>
<dbReference type="InterPro" id="IPR012754">
    <property type="entry name" value="DNA-dir_RpoC_beta_prime_bact"/>
</dbReference>
<dbReference type="InterPro" id="IPR000722">
    <property type="entry name" value="RNA_pol_asu"/>
</dbReference>
<dbReference type="InterPro" id="IPR006592">
    <property type="entry name" value="RNA_pol_N"/>
</dbReference>
<dbReference type="InterPro" id="IPR007080">
    <property type="entry name" value="RNA_pol_Rpb1_1"/>
</dbReference>
<dbReference type="InterPro" id="IPR007066">
    <property type="entry name" value="RNA_pol_Rpb1_3"/>
</dbReference>
<dbReference type="InterPro" id="IPR042102">
    <property type="entry name" value="RNA_pol_Rpb1_3_sf"/>
</dbReference>
<dbReference type="InterPro" id="IPR007083">
    <property type="entry name" value="RNA_pol_Rpb1_4"/>
</dbReference>
<dbReference type="InterPro" id="IPR007081">
    <property type="entry name" value="RNA_pol_Rpb1_5"/>
</dbReference>
<dbReference type="InterPro" id="IPR044893">
    <property type="entry name" value="RNA_pol_Rpb1_clamp_domain"/>
</dbReference>
<dbReference type="InterPro" id="IPR038120">
    <property type="entry name" value="Rpb1_funnel_sf"/>
</dbReference>
<dbReference type="NCBIfam" id="TIGR02386">
    <property type="entry name" value="rpoC_TIGR"/>
    <property type="match status" value="1"/>
</dbReference>
<dbReference type="PANTHER" id="PTHR19376">
    <property type="entry name" value="DNA-DIRECTED RNA POLYMERASE"/>
    <property type="match status" value="1"/>
</dbReference>
<dbReference type="PANTHER" id="PTHR19376:SF54">
    <property type="entry name" value="DNA-DIRECTED RNA POLYMERASE SUBUNIT BETA"/>
    <property type="match status" value="1"/>
</dbReference>
<dbReference type="Pfam" id="PF04997">
    <property type="entry name" value="RNA_pol_Rpb1_1"/>
    <property type="match status" value="1"/>
</dbReference>
<dbReference type="Pfam" id="PF00623">
    <property type="entry name" value="RNA_pol_Rpb1_2"/>
    <property type="match status" value="2"/>
</dbReference>
<dbReference type="Pfam" id="PF04983">
    <property type="entry name" value="RNA_pol_Rpb1_3"/>
    <property type="match status" value="1"/>
</dbReference>
<dbReference type="Pfam" id="PF05000">
    <property type="entry name" value="RNA_pol_Rpb1_4"/>
    <property type="match status" value="1"/>
</dbReference>
<dbReference type="Pfam" id="PF04998">
    <property type="entry name" value="RNA_pol_Rpb1_5"/>
    <property type="match status" value="1"/>
</dbReference>
<dbReference type="SMART" id="SM00663">
    <property type="entry name" value="RPOLA_N"/>
    <property type="match status" value="1"/>
</dbReference>
<dbReference type="SUPFAM" id="SSF64484">
    <property type="entry name" value="beta and beta-prime subunits of DNA dependent RNA-polymerase"/>
    <property type="match status" value="1"/>
</dbReference>
<evidence type="ECO:0000255" key="1">
    <source>
        <dbReference type="HAMAP-Rule" id="MF_01322"/>
    </source>
</evidence>
<keyword id="KW-0240">DNA-directed RNA polymerase</keyword>
<keyword id="KW-0460">Magnesium</keyword>
<keyword id="KW-0479">Metal-binding</keyword>
<keyword id="KW-0548">Nucleotidyltransferase</keyword>
<keyword id="KW-0804">Transcription</keyword>
<keyword id="KW-0808">Transferase</keyword>
<keyword id="KW-0862">Zinc</keyword>
<sequence length="1177" mass="131349">MFELNNFDAIQIGLASPEQIREWSRGEVKKPETINYRTLKPEKDGLFCERIFGPMKDWECHCGKYKRVRYKGIVCDRCGVEVTKAKVRRERMGHIELAAPVSHIWYFKGIPSRMGLLMDMSPRALEKVLYFASYIVIDPKETPLLKKQLLNEKEYREAIDKYGEDSFVAGMGAEAIQDLLGQIDLIAGSKELKEDLKQSTGQKRVRIIRRLEVVESFAKSGNNPKWMIINVIPVIPPDLRPMVQLDGGRFATSDLNDLYRRVINRNNRLKKLLDLGAPDIIVRNEKRMLQEAVDALIDNGRRGRPVTGPGNRPLKSLSDMLKGKQGRFRQNLLGKRVDYSGRSVIVVGPELKMYQCGLPKEMALELFKPFVMKKLVQDGIAHNIKSAKRMVERVLPQVWDVLEEVITDHPVLLNRAPTLHRLGIQAFQPVLVEGRAIKLHPLACTAYNADFDGDQMAVHVPLSVEAQAEARFLMLAAGNILKPSDGKPVCVPTQDMVLGSYYLTMDRTGAKGEGMTFSNKDEAVMAYESKYIDIHAQINVRVYKEIDGVLKSGIIKTTVGKLIFNESIPQDLGFVNREDEKEKFNLEIDFLVTKKSLGKVIDQSYMLHGPTKTSIMLDNIKALGYHYSSIGAVTVAASDMIVPPVKYDLLHEADETIDKIEKMYKRGFISEDERYERVIEKWTKTTEEVADALMDSLDKFNPIYMMADSGARGSKSQIKQLAGMRGLMASPSGKILELPIRASFREGLDVLEYFISTHGARKGNADTALKTADSGYLTRRLVDVCQDVIVREEDCGTDNGIYVSEIKEGSEVIEELRERLIGRYTAEDVVDPNSGEIIVARNEYMNPIIADKVVSAGIKKVKIRSAFTCNCKIGVCAKCYGMNMATAKKIDIGEAVGIIAAQSIGEPGTQLTMRTFHTGGVAGSDITQGLPRVEELFEARKPKGLAIVSEIHGNVRIEETKKKRAVFVMGADGDERSYDIPFGSRLKVSDGDYIEAGDEITEGSVNPHDIMNIKGVDGARRYLLSEVQKVYRLQGVDINDKHLEVVVKQMTRKVKILESGDTELLPGIMIDIFDFQEANDKVREFGGEEAKGEQSLLGITKAALATDSFLSAASFQETTRVLTEAAIKGKVDPLIGLKENVIIGKLIPAGTGMMKYKGLNLNTKNEKIEENETEIVE</sequence>
<organism>
    <name type="scientific">Clostridium botulinum (strain Eklund 17B / Type B)</name>
    <dbReference type="NCBI Taxonomy" id="935198"/>
    <lineage>
        <taxon>Bacteria</taxon>
        <taxon>Bacillati</taxon>
        <taxon>Bacillota</taxon>
        <taxon>Clostridia</taxon>
        <taxon>Eubacteriales</taxon>
        <taxon>Clostridiaceae</taxon>
        <taxon>Clostridium</taxon>
    </lineage>
</organism>
<proteinExistence type="inferred from homology"/>
<gene>
    <name evidence="1" type="primary">rpoC</name>
    <name type="ordered locus">CLL_A0232</name>
</gene>